<proteinExistence type="inferred from homology"/>
<comment type="function">
    <text evidence="1">F(1)F(0) ATP synthase produces ATP from ADP in the presence of a proton or sodium gradient. F-type ATPases consist of two structural domains, F(1) containing the extramembraneous catalytic core and F(0) containing the membrane proton channel, linked together by a central stalk and a peripheral stalk. During catalysis, ATP synthesis in the catalytic domain of F(1) is coupled via a rotary mechanism of the central stalk subunits to proton translocation.</text>
</comment>
<comment type="function">
    <text evidence="1">This protein is part of the stalk that links CF(0) to CF(1). It either transmits conformational changes from CF(0) to CF(1) or is implicated in proton conduction.</text>
</comment>
<comment type="subunit">
    <text evidence="1">F-type ATPases have 2 components, F(1) - the catalytic core - and F(0) - the membrane proton channel. F(1) has five subunits: alpha(3), beta(3), gamma(1), delta(1), epsilon(1). F(0) has three main subunits: a(1), b(2) and c(10-14). The alpha and beta chains form an alternating ring which encloses part of the gamma chain. F(1) is attached to F(0) by a central stalk formed by the gamma and epsilon chains, while a peripheral stalk is formed by the delta and b chains.</text>
</comment>
<comment type="subcellular location">
    <subcellularLocation>
        <location evidence="1">Cell membrane</location>
        <topology evidence="1">Peripheral membrane protein</topology>
    </subcellularLocation>
</comment>
<comment type="similarity">
    <text evidence="1">Belongs to the ATPase delta chain family.</text>
</comment>
<reference key="1">
    <citation type="journal article" date="2008" name="DNA Res.">
        <title>Comparative genome analysis of Lactobacillus reuteri and Lactobacillus fermentum reveal a genomic island for reuterin and cobalamin production.</title>
        <authorList>
            <person name="Morita H."/>
            <person name="Toh H."/>
            <person name="Fukuda S."/>
            <person name="Horikawa H."/>
            <person name="Oshima K."/>
            <person name="Suzuki T."/>
            <person name="Murakami M."/>
            <person name="Hisamatsu S."/>
            <person name="Kato Y."/>
            <person name="Takizawa T."/>
            <person name="Fukuoka H."/>
            <person name="Yoshimura T."/>
            <person name="Itoh K."/>
            <person name="O'Sullivan D.J."/>
            <person name="McKay L.L."/>
            <person name="Ohno H."/>
            <person name="Kikuchi J."/>
            <person name="Masaoka T."/>
            <person name="Hattori M."/>
        </authorList>
    </citation>
    <scope>NUCLEOTIDE SEQUENCE [LARGE SCALE GENOMIC DNA]</scope>
    <source>
        <strain>JCM 1112</strain>
    </source>
</reference>
<feature type="chain" id="PRO_0000371012" description="ATP synthase subunit delta">
    <location>
        <begin position="1"/>
        <end position="180"/>
    </location>
</feature>
<sequence>MSLDKKTVADRYAKALFELVDADNELDQTYQELIALRQVFEDNEGLDAALAGVQLSLDEKKSLIKDLQQGASKYVANLIQMVFDYGRIDCMVAIIDEFERRYDRKMKRMHADVTTAIQLDKQQEDQLKANLAKRFGANEVTLTKHVDPEILGGVIVHVDNKTLDGSLSSKIKQIRRLLVR</sequence>
<accession>B2G688</accession>
<name>ATPD_LIMRJ</name>
<gene>
    <name evidence="1" type="primary">atpH</name>
    <name type="ordered locus">LAR_0454</name>
</gene>
<dbReference type="EMBL" id="AP007281">
    <property type="protein sequence ID" value="BAG24970.1"/>
    <property type="molecule type" value="Genomic_DNA"/>
</dbReference>
<dbReference type="RefSeq" id="WP_003667559.1">
    <property type="nucleotide sequence ID" value="NC_010609.1"/>
</dbReference>
<dbReference type="SMR" id="B2G688"/>
<dbReference type="GeneID" id="77192081"/>
<dbReference type="KEGG" id="lrf:LAR_0454"/>
<dbReference type="HOGENOM" id="CLU_085114_4_1_9"/>
<dbReference type="GO" id="GO:0005886">
    <property type="term" value="C:plasma membrane"/>
    <property type="evidence" value="ECO:0007669"/>
    <property type="project" value="UniProtKB-SubCell"/>
</dbReference>
<dbReference type="GO" id="GO:0045259">
    <property type="term" value="C:proton-transporting ATP synthase complex"/>
    <property type="evidence" value="ECO:0007669"/>
    <property type="project" value="UniProtKB-KW"/>
</dbReference>
<dbReference type="GO" id="GO:0046933">
    <property type="term" value="F:proton-transporting ATP synthase activity, rotational mechanism"/>
    <property type="evidence" value="ECO:0007669"/>
    <property type="project" value="UniProtKB-UniRule"/>
</dbReference>
<dbReference type="Gene3D" id="1.10.520.20">
    <property type="entry name" value="N-terminal domain of the delta subunit of the F1F0-ATP synthase"/>
    <property type="match status" value="1"/>
</dbReference>
<dbReference type="HAMAP" id="MF_01416">
    <property type="entry name" value="ATP_synth_delta_bact"/>
    <property type="match status" value="1"/>
</dbReference>
<dbReference type="InterPro" id="IPR026015">
    <property type="entry name" value="ATP_synth_OSCP/delta_N_sf"/>
</dbReference>
<dbReference type="InterPro" id="IPR000711">
    <property type="entry name" value="ATPase_OSCP/dsu"/>
</dbReference>
<dbReference type="NCBIfam" id="TIGR01145">
    <property type="entry name" value="ATP_synt_delta"/>
    <property type="match status" value="1"/>
</dbReference>
<dbReference type="PANTHER" id="PTHR11910">
    <property type="entry name" value="ATP SYNTHASE DELTA CHAIN"/>
    <property type="match status" value="1"/>
</dbReference>
<dbReference type="Pfam" id="PF00213">
    <property type="entry name" value="OSCP"/>
    <property type="match status" value="1"/>
</dbReference>
<dbReference type="PRINTS" id="PR00125">
    <property type="entry name" value="ATPASEDELTA"/>
</dbReference>
<dbReference type="SUPFAM" id="SSF47928">
    <property type="entry name" value="N-terminal domain of the delta subunit of the F1F0-ATP synthase"/>
    <property type="match status" value="1"/>
</dbReference>
<evidence type="ECO:0000255" key="1">
    <source>
        <dbReference type="HAMAP-Rule" id="MF_01416"/>
    </source>
</evidence>
<organism>
    <name type="scientific">Limosilactobacillus reuteri subsp. reuteri (strain JCM 1112)</name>
    <name type="common">Lactobacillus reuteri</name>
    <dbReference type="NCBI Taxonomy" id="557433"/>
    <lineage>
        <taxon>Bacteria</taxon>
        <taxon>Bacillati</taxon>
        <taxon>Bacillota</taxon>
        <taxon>Bacilli</taxon>
        <taxon>Lactobacillales</taxon>
        <taxon>Lactobacillaceae</taxon>
        <taxon>Limosilactobacillus</taxon>
    </lineage>
</organism>
<keyword id="KW-0066">ATP synthesis</keyword>
<keyword id="KW-1003">Cell membrane</keyword>
<keyword id="KW-0139">CF(1)</keyword>
<keyword id="KW-0375">Hydrogen ion transport</keyword>
<keyword id="KW-0406">Ion transport</keyword>
<keyword id="KW-0472">Membrane</keyword>
<keyword id="KW-0813">Transport</keyword>
<protein>
    <recommendedName>
        <fullName evidence="1">ATP synthase subunit delta</fullName>
    </recommendedName>
    <alternativeName>
        <fullName evidence="1">ATP synthase F(1) sector subunit delta</fullName>
    </alternativeName>
    <alternativeName>
        <fullName evidence="1">F-type ATPase subunit delta</fullName>
        <shortName evidence="1">F-ATPase subunit delta</shortName>
    </alternativeName>
</protein>